<reference key="1">
    <citation type="journal article" date="2010" name="Genome Biol.">
        <title>Structure and dynamics of the pan-genome of Streptococcus pneumoniae and closely related species.</title>
        <authorList>
            <person name="Donati C."/>
            <person name="Hiller N.L."/>
            <person name="Tettelin H."/>
            <person name="Muzzi A."/>
            <person name="Croucher N.J."/>
            <person name="Angiuoli S.V."/>
            <person name="Oggioni M."/>
            <person name="Dunning Hotopp J.C."/>
            <person name="Hu F.Z."/>
            <person name="Riley D.R."/>
            <person name="Covacci A."/>
            <person name="Mitchell T.J."/>
            <person name="Bentley S.D."/>
            <person name="Kilian M."/>
            <person name="Ehrlich G.D."/>
            <person name="Rappuoli R."/>
            <person name="Moxon E.R."/>
            <person name="Masignani V."/>
        </authorList>
    </citation>
    <scope>NUCLEOTIDE SEQUENCE [LARGE SCALE GENOMIC DNA]</scope>
    <source>
        <strain>JJA</strain>
    </source>
</reference>
<organism>
    <name type="scientific">Streptococcus pneumoniae (strain JJA)</name>
    <dbReference type="NCBI Taxonomy" id="488222"/>
    <lineage>
        <taxon>Bacteria</taxon>
        <taxon>Bacillati</taxon>
        <taxon>Bacillota</taxon>
        <taxon>Bacilli</taxon>
        <taxon>Lactobacillales</taxon>
        <taxon>Streptococcaceae</taxon>
        <taxon>Streptococcus</taxon>
    </lineage>
</organism>
<accession>C1CEK4</accession>
<keyword id="KW-0963">Cytoplasm</keyword>
<keyword id="KW-0255">Endonuclease</keyword>
<keyword id="KW-0378">Hydrolase</keyword>
<keyword id="KW-0460">Magnesium</keyword>
<keyword id="KW-0479">Metal-binding</keyword>
<keyword id="KW-0507">mRNA processing</keyword>
<keyword id="KW-0540">Nuclease</keyword>
<keyword id="KW-0694">RNA-binding</keyword>
<keyword id="KW-0698">rRNA processing</keyword>
<keyword id="KW-0699">rRNA-binding</keyword>
<keyword id="KW-0819">tRNA processing</keyword>
<comment type="function">
    <text evidence="1">Digests double-stranded RNA. Involved in the processing of primary rRNA transcript to yield the immediate precursors to the large and small rRNAs (23S and 16S). Processes some mRNAs, and tRNAs when they are encoded in the rRNA operon. Processes pre-crRNA and tracrRNA of type II CRISPR loci if present in the organism.</text>
</comment>
<comment type="catalytic activity">
    <reaction evidence="1">
        <text>Endonucleolytic cleavage to 5'-phosphomonoester.</text>
        <dbReference type="EC" id="3.1.26.3"/>
    </reaction>
</comment>
<comment type="cofactor">
    <cofactor evidence="1">
        <name>Mg(2+)</name>
        <dbReference type="ChEBI" id="CHEBI:18420"/>
    </cofactor>
</comment>
<comment type="subunit">
    <text evidence="1">Homodimer.</text>
</comment>
<comment type="subcellular location">
    <subcellularLocation>
        <location evidence="1">Cytoplasm</location>
    </subcellularLocation>
</comment>
<comment type="similarity">
    <text evidence="1">Belongs to the ribonuclease III family.</text>
</comment>
<protein>
    <recommendedName>
        <fullName evidence="1">Ribonuclease 3</fullName>
        <ecNumber evidence="1">3.1.26.3</ecNumber>
    </recommendedName>
    <alternativeName>
        <fullName evidence="1">Ribonuclease III</fullName>
        <shortName evidence="1">RNase III</shortName>
    </alternativeName>
</protein>
<sequence length="232" mass="26198">MKELQTVLKNHFAIEFTDKKLLETAFTHTSYANEHRLLKISHNERLEFLGDAVLQLLISEYLYKKYPKKPEGDLSKLRAMIVREESLAGFARDCQFDQFIKLGKGEEKSGGRNRDTILGDAFEAFLGALLLDKDVAKVKEFIYQVMIPKVEAGEFEMITDYKTHLQELLQVNGDVAIRYQVISETGPAHDKVFDVEVLVEGKSIGQGQGRSKKLAEQEAAKNAVEKGLDSCI</sequence>
<dbReference type="EC" id="3.1.26.3" evidence="1"/>
<dbReference type="EMBL" id="CP000919">
    <property type="protein sequence ID" value="ACO18707.1"/>
    <property type="molecule type" value="Genomic_DNA"/>
</dbReference>
<dbReference type="RefSeq" id="WP_000661498.1">
    <property type="nucleotide sequence ID" value="NC_012466.1"/>
</dbReference>
<dbReference type="SMR" id="C1CEK4"/>
<dbReference type="KEGG" id="sjj:SPJ_1161"/>
<dbReference type="HOGENOM" id="CLU_000907_1_3_9"/>
<dbReference type="Proteomes" id="UP000002206">
    <property type="component" value="Chromosome"/>
</dbReference>
<dbReference type="GO" id="GO:0005737">
    <property type="term" value="C:cytoplasm"/>
    <property type="evidence" value="ECO:0007669"/>
    <property type="project" value="UniProtKB-SubCell"/>
</dbReference>
<dbReference type="GO" id="GO:0003725">
    <property type="term" value="F:double-stranded RNA binding"/>
    <property type="evidence" value="ECO:0007669"/>
    <property type="project" value="TreeGrafter"/>
</dbReference>
<dbReference type="GO" id="GO:0046872">
    <property type="term" value="F:metal ion binding"/>
    <property type="evidence" value="ECO:0007669"/>
    <property type="project" value="UniProtKB-KW"/>
</dbReference>
<dbReference type="GO" id="GO:0004525">
    <property type="term" value="F:ribonuclease III activity"/>
    <property type="evidence" value="ECO:0007669"/>
    <property type="project" value="UniProtKB-UniRule"/>
</dbReference>
<dbReference type="GO" id="GO:0019843">
    <property type="term" value="F:rRNA binding"/>
    <property type="evidence" value="ECO:0007669"/>
    <property type="project" value="UniProtKB-KW"/>
</dbReference>
<dbReference type="GO" id="GO:0006397">
    <property type="term" value="P:mRNA processing"/>
    <property type="evidence" value="ECO:0007669"/>
    <property type="project" value="UniProtKB-UniRule"/>
</dbReference>
<dbReference type="GO" id="GO:0010468">
    <property type="term" value="P:regulation of gene expression"/>
    <property type="evidence" value="ECO:0007669"/>
    <property type="project" value="TreeGrafter"/>
</dbReference>
<dbReference type="GO" id="GO:0006364">
    <property type="term" value="P:rRNA processing"/>
    <property type="evidence" value="ECO:0007669"/>
    <property type="project" value="UniProtKB-UniRule"/>
</dbReference>
<dbReference type="GO" id="GO:0008033">
    <property type="term" value="P:tRNA processing"/>
    <property type="evidence" value="ECO:0007669"/>
    <property type="project" value="UniProtKB-KW"/>
</dbReference>
<dbReference type="CDD" id="cd10845">
    <property type="entry name" value="DSRM_RNAse_III_family"/>
    <property type="match status" value="1"/>
</dbReference>
<dbReference type="CDD" id="cd00593">
    <property type="entry name" value="RIBOc"/>
    <property type="match status" value="1"/>
</dbReference>
<dbReference type="FunFam" id="1.10.1520.10:FF:000001">
    <property type="entry name" value="Ribonuclease 3"/>
    <property type="match status" value="1"/>
</dbReference>
<dbReference type="FunFam" id="3.30.160.20:FF:000003">
    <property type="entry name" value="Ribonuclease 3"/>
    <property type="match status" value="1"/>
</dbReference>
<dbReference type="Gene3D" id="3.30.160.20">
    <property type="match status" value="1"/>
</dbReference>
<dbReference type="Gene3D" id="1.10.1520.10">
    <property type="entry name" value="Ribonuclease III domain"/>
    <property type="match status" value="1"/>
</dbReference>
<dbReference type="HAMAP" id="MF_00104">
    <property type="entry name" value="RNase_III"/>
    <property type="match status" value="1"/>
</dbReference>
<dbReference type="InterPro" id="IPR014720">
    <property type="entry name" value="dsRBD_dom"/>
</dbReference>
<dbReference type="InterPro" id="IPR011907">
    <property type="entry name" value="RNase_III"/>
</dbReference>
<dbReference type="InterPro" id="IPR000999">
    <property type="entry name" value="RNase_III_dom"/>
</dbReference>
<dbReference type="InterPro" id="IPR036389">
    <property type="entry name" value="RNase_III_sf"/>
</dbReference>
<dbReference type="NCBIfam" id="TIGR02191">
    <property type="entry name" value="RNaseIII"/>
    <property type="match status" value="1"/>
</dbReference>
<dbReference type="PANTHER" id="PTHR11207:SF0">
    <property type="entry name" value="RIBONUCLEASE 3"/>
    <property type="match status" value="1"/>
</dbReference>
<dbReference type="PANTHER" id="PTHR11207">
    <property type="entry name" value="RIBONUCLEASE III"/>
    <property type="match status" value="1"/>
</dbReference>
<dbReference type="Pfam" id="PF00035">
    <property type="entry name" value="dsrm"/>
    <property type="match status" value="1"/>
</dbReference>
<dbReference type="Pfam" id="PF14622">
    <property type="entry name" value="Ribonucleas_3_3"/>
    <property type="match status" value="1"/>
</dbReference>
<dbReference type="SMART" id="SM00358">
    <property type="entry name" value="DSRM"/>
    <property type="match status" value="1"/>
</dbReference>
<dbReference type="SMART" id="SM00535">
    <property type="entry name" value="RIBOc"/>
    <property type="match status" value="1"/>
</dbReference>
<dbReference type="SUPFAM" id="SSF54768">
    <property type="entry name" value="dsRNA-binding domain-like"/>
    <property type="match status" value="1"/>
</dbReference>
<dbReference type="SUPFAM" id="SSF69065">
    <property type="entry name" value="RNase III domain-like"/>
    <property type="match status" value="1"/>
</dbReference>
<dbReference type="PROSITE" id="PS50137">
    <property type="entry name" value="DS_RBD"/>
    <property type="match status" value="1"/>
</dbReference>
<dbReference type="PROSITE" id="PS00517">
    <property type="entry name" value="RNASE_3_1"/>
    <property type="match status" value="1"/>
</dbReference>
<dbReference type="PROSITE" id="PS50142">
    <property type="entry name" value="RNASE_3_2"/>
    <property type="match status" value="1"/>
</dbReference>
<gene>
    <name evidence="1" type="primary">rnc</name>
    <name type="ordered locus">SPJ_1161</name>
</gene>
<evidence type="ECO:0000255" key="1">
    <source>
        <dbReference type="HAMAP-Rule" id="MF_00104"/>
    </source>
</evidence>
<name>RNC_STRZJ</name>
<feature type="chain" id="PRO_1000118937" description="Ribonuclease 3">
    <location>
        <begin position="1"/>
        <end position="232"/>
    </location>
</feature>
<feature type="domain" description="RNase III" evidence="1">
    <location>
        <begin position="5"/>
        <end position="134"/>
    </location>
</feature>
<feature type="domain" description="DRBM" evidence="1">
    <location>
        <begin position="160"/>
        <end position="229"/>
    </location>
</feature>
<feature type="active site" evidence="1">
    <location>
        <position position="51"/>
    </location>
</feature>
<feature type="active site" evidence="1">
    <location>
        <position position="123"/>
    </location>
</feature>
<feature type="binding site" evidence="1">
    <location>
        <position position="47"/>
    </location>
    <ligand>
        <name>Mg(2+)</name>
        <dbReference type="ChEBI" id="CHEBI:18420"/>
    </ligand>
</feature>
<feature type="binding site" evidence="1">
    <location>
        <position position="120"/>
    </location>
    <ligand>
        <name>Mg(2+)</name>
        <dbReference type="ChEBI" id="CHEBI:18420"/>
    </ligand>
</feature>
<feature type="binding site" evidence="1">
    <location>
        <position position="123"/>
    </location>
    <ligand>
        <name>Mg(2+)</name>
        <dbReference type="ChEBI" id="CHEBI:18420"/>
    </ligand>
</feature>
<proteinExistence type="inferred from homology"/>